<name>TOLB_BORPA</name>
<evidence type="ECO:0000255" key="1">
    <source>
        <dbReference type="HAMAP-Rule" id="MF_00671"/>
    </source>
</evidence>
<dbReference type="EMBL" id="BX640434">
    <property type="protein sequence ID" value="CAE39075.1"/>
    <property type="molecule type" value="Genomic_DNA"/>
</dbReference>
<dbReference type="SMR" id="Q7W476"/>
<dbReference type="KEGG" id="bpa:BPP3792"/>
<dbReference type="HOGENOM" id="CLU_047123_0_0_4"/>
<dbReference type="Proteomes" id="UP000001421">
    <property type="component" value="Chromosome"/>
</dbReference>
<dbReference type="GO" id="GO:0042597">
    <property type="term" value="C:periplasmic space"/>
    <property type="evidence" value="ECO:0007669"/>
    <property type="project" value="UniProtKB-SubCell"/>
</dbReference>
<dbReference type="GO" id="GO:0051301">
    <property type="term" value="P:cell division"/>
    <property type="evidence" value="ECO:0007669"/>
    <property type="project" value="UniProtKB-UniRule"/>
</dbReference>
<dbReference type="GO" id="GO:0017038">
    <property type="term" value="P:protein import"/>
    <property type="evidence" value="ECO:0007669"/>
    <property type="project" value="InterPro"/>
</dbReference>
<dbReference type="Gene3D" id="2.120.10.30">
    <property type="entry name" value="TolB, C-terminal domain"/>
    <property type="match status" value="1"/>
</dbReference>
<dbReference type="Gene3D" id="3.40.50.10070">
    <property type="entry name" value="TolB, N-terminal domain"/>
    <property type="match status" value="1"/>
</dbReference>
<dbReference type="HAMAP" id="MF_00671">
    <property type="entry name" value="TolB"/>
    <property type="match status" value="1"/>
</dbReference>
<dbReference type="InterPro" id="IPR011042">
    <property type="entry name" value="6-blade_b-propeller_TolB-like"/>
</dbReference>
<dbReference type="InterPro" id="IPR011659">
    <property type="entry name" value="PD40"/>
</dbReference>
<dbReference type="InterPro" id="IPR014167">
    <property type="entry name" value="Tol-Pal_TolB"/>
</dbReference>
<dbReference type="InterPro" id="IPR007195">
    <property type="entry name" value="TolB_N"/>
</dbReference>
<dbReference type="NCBIfam" id="TIGR02800">
    <property type="entry name" value="propeller_TolB"/>
    <property type="match status" value="1"/>
</dbReference>
<dbReference type="PANTHER" id="PTHR36842:SF1">
    <property type="entry name" value="PROTEIN TOLB"/>
    <property type="match status" value="1"/>
</dbReference>
<dbReference type="PANTHER" id="PTHR36842">
    <property type="entry name" value="PROTEIN TOLB HOMOLOG"/>
    <property type="match status" value="1"/>
</dbReference>
<dbReference type="Pfam" id="PF07676">
    <property type="entry name" value="PD40"/>
    <property type="match status" value="4"/>
</dbReference>
<dbReference type="Pfam" id="PF04052">
    <property type="entry name" value="TolB_N"/>
    <property type="match status" value="1"/>
</dbReference>
<dbReference type="SUPFAM" id="SSF52964">
    <property type="entry name" value="TolB, N-terminal domain"/>
    <property type="match status" value="1"/>
</dbReference>
<dbReference type="SUPFAM" id="SSF69304">
    <property type="entry name" value="Tricorn protease N-terminal domain"/>
    <property type="match status" value="1"/>
</dbReference>
<keyword id="KW-0131">Cell cycle</keyword>
<keyword id="KW-0132">Cell division</keyword>
<keyword id="KW-0574">Periplasm</keyword>
<keyword id="KW-0732">Signal</keyword>
<gene>
    <name evidence="1" type="primary">tolB</name>
    <name type="ordered locus">BPP3792</name>
</gene>
<comment type="function">
    <text evidence="1">Part of the Tol-Pal system, which plays a role in outer membrane invagination during cell division and is important for maintaining outer membrane integrity.</text>
</comment>
<comment type="subunit">
    <text evidence="1">The Tol-Pal system is composed of five core proteins: the inner membrane proteins TolA, TolQ and TolR, the periplasmic protein TolB and the outer membrane protein Pal. They form a network linking the inner and outer membranes and the peptidoglycan layer.</text>
</comment>
<comment type="subcellular location">
    <subcellularLocation>
        <location evidence="1">Periplasm</location>
    </subcellularLocation>
</comment>
<comment type="similarity">
    <text evidence="1">Belongs to the TolB family.</text>
</comment>
<reference key="1">
    <citation type="journal article" date="2003" name="Nat. Genet.">
        <title>Comparative analysis of the genome sequences of Bordetella pertussis, Bordetella parapertussis and Bordetella bronchiseptica.</title>
        <authorList>
            <person name="Parkhill J."/>
            <person name="Sebaihia M."/>
            <person name="Preston A."/>
            <person name="Murphy L.D."/>
            <person name="Thomson N.R."/>
            <person name="Harris D.E."/>
            <person name="Holden M.T.G."/>
            <person name="Churcher C.M."/>
            <person name="Bentley S.D."/>
            <person name="Mungall K.L."/>
            <person name="Cerdeno-Tarraga A.-M."/>
            <person name="Temple L."/>
            <person name="James K.D."/>
            <person name="Harris B."/>
            <person name="Quail M.A."/>
            <person name="Achtman M."/>
            <person name="Atkin R."/>
            <person name="Baker S."/>
            <person name="Basham D."/>
            <person name="Bason N."/>
            <person name="Cherevach I."/>
            <person name="Chillingworth T."/>
            <person name="Collins M."/>
            <person name="Cronin A."/>
            <person name="Davis P."/>
            <person name="Doggett J."/>
            <person name="Feltwell T."/>
            <person name="Goble A."/>
            <person name="Hamlin N."/>
            <person name="Hauser H."/>
            <person name="Holroyd S."/>
            <person name="Jagels K."/>
            <person name="Leather S."/>
            <person name="Moule S."/>
            <person name="Norberczak H."/>
            <person name="O'Neil S."/>
            <person name="Ormond D."/>
            <person name="Price C."/>
            <person name="Rabbinowitsch E."/>
            <person name="Rutter S."/>
            <person name="Sanders M."/>
            <person name="Saunders D."/>
            <person name="Seeger K."/>
            <person name="Sharp S."/>
            <person name="Simmonds M."/>
            <person name="Skelton J."/>
            <person name="Squares R."/>
            <person name="Squares S."/>
            <person name="Stevens K."/>
            <person name="Unwin L."/>
            <person name="Whitehead S."/>
            <person name="Barrell B.G."/>
            <person name="Maskell D.J."/>
        </authorList>
    </citation>
    <scope>NUCLEOTIDE SEQUENCE [LARGE SCALE GENOMIC DNA]</scope>
    <source>
        <strain>12822 / ATCC BAA-587 / NCTC 13253</strain>
    </source>
</reference>
<feature type="signal peptide" evidence="1">
    <location>
        <begin position="1"/>
        <end position="39"/>
    </location>
</feature>
<feature type="chain" id="PRO_0000034627" description="Tol-Pal system protein TolB" evidence="1">
    <location>
        <begin position="40"/>
        <end position="441"/>
    </location>
</feature>
<organism>
    <name type="scientific">Bordetella parapertussis (strain 12822 / ATCC BAA-587 / NCTC 13253)</name>
    <dbReference type="NCBI Taxonomy" id="257311"/>
    <lineage>
        <taxon>Bacteria</taxon>
        <taxon>Pseudomonadati</taxon>
        <taxon>Pseudomonadota</taxon>
        <taxon>Betaproteobacteria</taxon>
        <taxon>Burkholderiales</taxon>
        <taxon>Alcaligenaceae</taxon>
        <taxon>Bordetella</taxon>
    </lineage>
</organism>
<protein>
    <recommendedName>
        <fullName evidence="1">Tol-Pal system protein TolB</fullName>
    </recommendedName>
</protein>
<sequence length="441" mass="47604">MPAMTPAFRRADLTGFLRTYGAALILLLAAMLAWQPAQAQLRVDISGTGATQYPVAIADFAVDDTHGRALAEVIRADLTRTGQFRLINAADSGLNVDSQVAHDDWRAKGADFLAYGSITRGPDGRYDVRYRLADTVKKGQLDGVAFSGTEQELRRVAHQIADRIYEKITGVRGVFSTRIAYVLKRGSTYELQVADADGQNPQVALRSREPIISPSWSPDGSRLAYVSFESGKPVVYVHTLATSARIPVANFKGNNSAPAWSPDGSQLAVALTRDGLSQIYIVSAGGGSNMRRITRSPGIDTEPNFTPDGRSIIFTSDRSGGPQIYQTGLDGGDARRLTFNGGYNISPRISPDGSTLLYVARRDGAFRIASLNLSSGSETLLTDGRDDQSPSFAPNGMQVLYAAIQNGRSVLAGVSSDRRVRQTLSVLNGEIREPTWGPFTR</sequence>
<proteinExistence type="inferred from homology"/>
<accession>Q7W476</accession>